<reference key="1">
    <citation type="submission" date="2007-08" db="EMBL/GenBank/DDBJ databases">
        <title>Complete sequence of Shewanella sediminis HAW-EB3.</title>
        <authorList>
            <consortium name="US DOE Joint Genome Institute"/>
            <person name="Copeland A."/>
            <person name="Lucas S."/>
            <person name="Lapidus A."/>
            <person name="Barry K."/>
            <person name="Glavina del Rio T."/>
            <person name="Dalin E."/>
            <person name="Tice H."/>
            <person name="Pitluck S."/>
            <person name="Chertkov O."/>
            <person name="Brettin T."/>
            <person name="Bruce D."/>
            <person name="Detter J.C."/>
            <person name="Han C."/>
            <person name="Schmutz J."/>
            <person name="Larimer F."/>
            <person name="Land M."/>
            <person name="Hauser L."/>
            <person name="Kyrpides N."/>
            <person name="Kim E."/>
            <person name="Zhao J.-S."/>
            <person name="Richardson P."/>
        </authorList>
    </citation>
    <scope>NUCLEOTIDE SEQUENCE [LARGE SCALE GENOMIC DNA]</scope>
    <source>
        <strain>HAW-EB3</strain>
    </source>
</reference>
<keyword id="KW-0547">Nucleotide-binding</keyword>
<keyword id="KW-1185">Reference proteome</keyword>
<feature type="chain" id="PRO_1000082636" description="Nucleotide-binding protein Ssed_3443">
    <location>
        <begin position="1"/>
        <end position="161"/>
    </location>
</feature>
<organism>
    <name type="scientific">Shewanella sediminis (strain HAW-EB3)</name>
    <dbReference type="NCBI Taxonomy" id="425104"/>
    <lineage>
        <taxon>Bacteria</taxon>
        <taxon>Pseudomonadati</taxon>
        <taxon>Pseudomonadota</taxon>
        <taxon>Gammaproteobacteria</taxon>
        <taxon>Alteromonadales</taxon>
        <taxon>Shewanellaceae</taxon>
        <taxon>Shewanella</taxon>
    </lineage>
</organism>
<proteinExistence type="inferred from homology"/>
<sequence length="161" mass="18358">MPSMDIVSEVDEVELRNAVENSVRELKSRFDFRGKEASIEYKDHVVTLSAEDDFQCQQLVDILRMQMSKRSVDPASMDVDEKALHSGKTFSLKVRFKEGIETLIAKKLVKMIKDSKLKVQSSIQGDSVRVTGKKRDDLQAVMALARESELGQPFQFNNFRD</sequence>
<comment type="function">
    <text evidence="1">Nucleotide-binding protein.</text>
</comment>
<comment type="similarity">
    <text evidence="1">Belongs to the YajQ family.</text>
</comment>
<protein>
    <recommendedName>
        <fullName evidence="1">Nucleotide-binding protein Ssed_3443</fullName>
    </recommendedName>
</protein>
<evidence type="ECO:0000255" key="1">
    <source>
        <dbReference type="HAMAP-Rule" id="MF_00632"/>
    </source>
</evidence>
<accession>A8FYX4</accession>
<dbReference type="EMBL" id="CP000821">
    <property type="protein sequence ID" value="ABV38047.1"/>
    <property type="molecule type" value="Genomic_DNA"/>
</dbReference>
<dbReference type="RefSeq" id="WP_012143777.1">
    <property type="nucleotide sequence ID" value="NC_009831.1"/>
</dbReference>
<dbReference type="SMR" id="A8FYX4"/>
<dbReference type="STRING" id="425104.Ssed_3443"/>
<dbReference type="KEGG" id="sse:Ssed_3443"/>
<dbReference type="eggNOG" id="COG1666">
    <property type="taxonomic scope" value="Bacteria"/>
</dbReference>
<dbReference type="HOGENOM" id="CLU_099839_1_0_6"/>
<dbReference type="OrthoDB" id="9801447at2"/>
<dbReference type="Proteomes" id="UP000002015">
    <property type="component" value="Chromosome"/>
</dbReference>
<dbReference type="GO" id="GO:0005829">
    <property type="term" value="C:cytosol"/>
    <property type="evidence" value="ECO:0007669"/>
    <property type="project" value="TreeGrafter"/>
</dbReference>
<dbReference type="GO" id="GO:0000166">
    <property type="term" value="F:nucleotide binding"/>
    <property type="evidence" value="ECO:0007669"/>
    <property type="project" value="TreeGrafter"/>
</dbReference>
<dbReference type="CDD" id="cd11740">
    <property type="entry name" value="YajQ_like"/>
    <property type="match status" value="1"/>
</dbReference>
<dbReference type="FunFam" id="3.30.70.860:FF:000001">
    <property type="entry name" value="UPF0234 protein YajQ"/>
    <property type="match status" value="1"/>
</dbReference>
<dbReference type="Gene3D" id="3.30.70.860">
    <property type="match status" value="1"/>
</dbReference>
<dbReference type="Gene3D" id="3.30.70.990">
    <property type="entry name" value="YajQ-like, domain 2"/>
    <property type="match status" value="1"/>
</dbReference>
<dbReference type="HAMAP" id="MF_00632">
    <property type="entry name" value="YajQ"/>
    <property type="match status" value="1"/>
</dbReference>
<dbReference type="InterPro" id="IPR007551">
    <property type="entry name" value="DUF520"/>
</dbReference>
<dbReference type="InterPro" id="IPR035571">
    <property type="entry name" value="UPF0234-like_C"/>
</dbReference>
<dbReference type="InterPro" id="IPR035570">
    <property type="entry name" value="UPF0234_N"/>
</dbReference>
<dbReference type="InterPro" id="IPR036183">
    <property type="entry name" value="YajQ-like_sf"/>
</dbReference>
<dbReference type="NCBIfam" id="NF003819">
    <property type="entry name" value="PRK05412.1"/>
    <property type="match status" value="1"/>
</dbReference>
<dbReference type="PANTHER" id="PTHR30476">
    <property type="entry name" value="UPF0234 PROTEIN YAJQ"/>
    <property type="match status" value="1"/>
</dbReference>
<dbReference type="PANTHER" id="PTHR30476:SF0">
    <property type="entry name" value="UPF0234 PROTEIN YAJQ"/>
    <property type="match status" value="1"/>
</dbReference>
<dbReference type="Pfam" id="PF04461">
    <property type="entry name" value="DUF520"/>
    <property type="match status" value="1"/>
</dbReference>
<dbReference type="SUPFAM" id="SSF89963">
    <property type="entry name" value="YajQ-like"/>
    <property type="match status" value="2"/>
</dbReference>
<gene>
    <name type="ordered locus">Ssed_3443</name>
</gene>
<name>Y3443_SHESH</name>